<gene>
    <name evidence="1" type="primary">nadK2</name>
    <name type="ordered locus">OB2196</name>
</gene>
<comment type="function">
    <text evidence="1">Involved in the regulation of the intracellular balance of NAD and NADP, and is a key enzyme in the biosynthesis of NADP. Catalyzes specifically the phosphorylation on 2'-hydroxyl of the adenosine moiety of NAD to yield NADP.</text>
</comment>
<comment type="catalytic activity">
    <reaction evidence="1">
        <text>NAD(+) + ATP = ADP + NADP(+) + H(+)</text>
        <dbReference type="Rhea" id="RHEA:18629"/>
        <dbReference type="ChEBI" id="CHEBI:15378"/>
        <dbReference type="ChEBI" id="CHEBI:30616"/>
        <dbReference type="ChEBI" id="CHEBI:57540"/>
        <dbReference type="ChEBI" id="CHEBI:58349"/>
        <dbReference type="ChEBI" id="CHEBI:456216"/>
        <dbReference type="EC" id="2.7.1.23"/>
    </reaction>
</comment>
<comment type="cofactor">
    <cofactor evidence="1">
        <name>a divalent metal cation</name>
        <dbReference type="ChEBI" id="CHEBI:60240"/>
    </cofactor>
</comment>
<comment type="subcellular location">
    <subcellularLocation>
        <location evidence="1">Cytoplasm</location>
    </subcellularLocation>
</comment>
<comment type="similarity">
    <text evidence="1">Belongs to the NAD kinase family.</text>
</comment>
<protein>
    <recommendedName>
        <fullName evidence="1">NAD kinase 2</fullName>
        <ecNumber evidence="1">2.7.1.23</ecNumber>
    </recommendedName>
    <alternativeName>
        <fullName evidence="1">ATP-dependent NAD kinase 2</fullName>
    </alternativeName>
</protein>
<evidence type="ECO:0000255" key="1">
    <source>
        <dbReference type="HAMAP-Rule" id="MF_00361"/>
    </source>
</evidence>
<sequence length="266" mass="30030">MAERQNIFFYYHPDEEMDGKVKALKKISSENGLNVVENSSDASIIVSIGGDGTFLQAVRKTGFRQDCIYTGIMREGQSGLYCDFNIDNFDNMIHSVLHEDLEVRRFPTIKVQINGETPFYCLNEVSIRSTIVKTIVINVCVDGFHFETFRGDGMIVSTPTGSTGYSKSARGAVIDPLIHGFQVSEVASLNNNQYRTLGSSFLLNKDRKLELEILQDGNDHPIISLDNEASPIKRIQNIDVTMDETIIKTVKLKNNSYWERVKRTFL</sequence>
<reference key="1">
    <citation type="journal article" date="2002" name="Nucleic Acids Res.">
        <title>Genome sequence of Oceanobacillus iheyensis isolated from the Iheya Ridge and its unexpected adaptive capabilities to extreme environments.</title>
        <authorList>
            <person name="Takami H."/>
            <person name="Takaki Y."/>
            <person name="Uchiyama I."/>
        </authorList>
    </citation>
    <scope>NUCLEOTIDE SEQUENCE [LARGE SCALE GENOMIC DNA]</scope>
    <source>
        <strain>DSM 14371 / CIP 107618 / JCM 11309 / KCTC 3954 / HTE831</strain>
    </source>
</reference>
<name>NADK2_OCEIH</name>
<accession>Q8EPB4</accession>
<feature type="chain" id="PRO_0000120643" description="NAD kinase 2">
    <location>
        <begin position="1"/>
        <end position="266"/>
    </location>
</feature>
<feature type="active site" description="Proton acceptor" evidence="1">
    <location>
        <position position="51"/>
    </location>
</feature>
<feature type="binding site" evidence="1">
    <location>
        <begin position="51"/>
        <end position="52"/>
    </location>
    <ligand>
        <name>NAD(+)</name>
        <dbReference type="ChEBI" id="CHEBI:57540"/>
    </ligand>
</feature>
<feature type="binding site" evidence="1">
    <location>
        <begin position="123"/>
        <end position="124"/>
    </location>
    <ligand>
        <name>NAD(+)</name>
        <dbReference type="ChEBI" id="CHEBI:57540"/>
    </ligand>
</feature>
<feature type="binding site" evidence="1">
    <location>
        <position position="150"/>
    </location>
    <ligand>
        <name>NAD(+)</name>
        <dbReference type="ChEBI" id="CHEBI:57540"/>
    </ligand>
</feature>
<feature type="binding site" evidence="1">
    <location>
        <position position="152"/>
    </location>
    <ligand>
        <name>NAD(+)</name>
        <dbReference type="ChEBI" id="CHEBI:57540"/>
    </ligand>
</feature>
<feature type="binding site" evidence="1">
    <location>
        <begin position="163"/>
        <end position="168"/>
    </location>
    <ligand>
        <name>NAD(+)</name>
        <dbReference type="ChEBI" id="CHEBI:57540"/>
    </ligand>
</feature>
<feature type="binding site" evidence="1">
    <location>
        <position position="187"/>
    </location>
    <ligand>
        <name>NAD(+)</name>
        <dbReference type="ChEBI" id="CHEBI:57540"/>
    </ligand>
</feature>
<keyword id="KW-0067">ATP-binding</keyword>
<keyword id="KW-0963">Cytoplasm</keyword>
<keyword id="KW-0418">Kinase</keyword>
<keyword id="KW-0520">NAD</keyword>
<keyword id="KW-0521">NADP</keyword>
<keyword id="KW-0547">Nucleotide-binding</keyword>
<keyword id="KW-1185">Reference proteome</keyword>
<keyword id="KW-0808">Transferase</keyword>
<proteinExistence type="inferred from homology"/>
<dbReference type="EC" id="2.7.1.23" evidence="1"/>
<dbReference type="EMBL" id="BA000028">
    <property type="protein sequence ID" value="BAC14152.1"/>
    <property type="molecule type" value="Genomic_DNA"/>
</dbReference>
<dbReference type="RefSeq" id="WP_011066590.1">
    <property type="nucleotide sequence ID" value="NC_004193.1"/>
</dbReference>
<dbReference type="SMR" id="Q8EPB4"/>
<dbReference type="STRING" id="221109.gene:10734444"/>
<dbReference type="KEGG" id="oih:OB2196"/>
<dbReference type="eggNOG" id="COG0061">
    <property type="taxonomic scope" value="Bacteria"/>
</dbReference>
<dbReference type="HOGENOM" id="CLU_008831_0_3_9"/>
<dbReference type="OrthoDB" id="9774737at2"/>
<dbReference type="PhylomeDB" id="Q8EPB4"/>
<dbReference type="Proteomes" id="UP000000822">
    <property type="component" value="Chromosome"/>
</dbReference>
<dbReference type="GO" id="GO:0005737">
    <property type="term" value="C:cytoplasm"/>
    <property type="evidence" value="ECO:0007669"/>
    <property type="project" value="UniProtKB-SubCell"/>
</dbReference>
<dbReference type="GO" id="GO:0005524">
    <property type="term" value="F:ATP binding"/>
    <property type="evidence" value="ECO:0007669"/>
    <property type="project" value="UniProtKB-KW"/>
</dbReference>
<dbReference type="GO" id="GO:0046872">
    <property type="term" value="F:metal ion binding"/>
    <property type="evidence" value="ECO:0007669"/>
    <property type="project" value="UniProtKB-UniRule"/>
</dbReference>
<dbReference type="GO" id="GO:0051287">
    <property type="term" value="F:NAD binding"/>
    <property type="evidence" value="ECO:0007669"/>
    <property type="project" value="UniProtKB-ARBA"/>
</dbReference>
<dbReference type="GO" id="GO:0003951">
    <property type="term" value="F:NAD+ kinase activity"/>
    <property type="evidence" value="ECO:0007669"/>
    <property type="project" value="UniProtKB-UniRule"/>
</dbReference>
<dbReference type="GO" id="GO:0019674">
    <property type="term" value="P:NAD metabolic process"/>
    <property type="evidence" value="ECO:0007669"/>
    <property type="project" value="InterPro"/>
</dbReference>
<dbReference type="GO" id="GO:0006741">
    <property type="term" value="P:NADP biosynthetic process"/>
    <property type="evidence" value="ECO:0007669"/>
    <property type="project" value="UniProtKB-UniRule"/>
</dbReference>
<dbReference type="Gene3D" id="3.40.50.10330">
    <property type="entry name" value="Probable inorganic polyphosphate/atp-NAD kinase, domain 1"/>
    <property type="match status" value="1"/>
</dbReference>
<dbReference type="Gene3D" id="2.60.200.30">
    <property type="entry name" value="Probable inorganic polyphosphate/atp-NAD kinase, domain 2"/>
    <property type="match status" value="1"/>
</dbReference>
<dbReference type="HAMAP" id="MF_00361">
    <property type="entry name" value="NAD_kinase"/>
    <property type="match status" value="1"/>
</dbReference>
<dbReference type="InterPro" id="IPR017438">
    <property type="entry name" value="ATP-NAD_kinase_N"/>
</dbReference>
<dbReference type="InterPro" id="IPR017437">
    <property type="entry name" value="ATP-NAD_kinase_PpnK-typ_C"/>
</dbReference>
<dbReference type="InterPro" id="IPR016064">
    <property type="entry name" value="NAD/diacylglycerol_kinase_sf"/>
</dbReference>
<dbReference type="InterPro" id="IPR002504">
    <property type="entry name" value="NADK"/>
</dbReference>
<dbReference type="NCBIfam" id="NF002902">
    <property type="entry name" value="PRK03501.1"/>
    <property type="match status" value="1"/>
</dbReference>
<dbReference type="PANTHER" id="PTHR20275">
    <property type="entry name" value="NAD KINASE"/>
    <property type="match status" value="1"/>
</dbReference>
<dbReference type="PANTHER" id="PTHR20275:SF9">
    <property type="entry name" value="NAD KINASE 2"/>
    <property type="match status" value="1"/>
</dbReference>
<dbReference type="Pfam" id="PF20143">
    <property type="entry name" value="NAD_kinase_C"/>
    <property type="match status" value="1"/>
</dbReference>
<dbReference type="SUPFAM" id="SSF111331">
    <property type="entry name" value="NAD kinase/diacylglycerol kinase-like"/>
    <property type="match status" value="1"/>
</dbReference>
<organism>
    <name type="scientific">Oceanobacillus iheyensis (strain DSM 14371 / CIP 107618 / JCM 11309 / KCTC 3954 / HTE831)</name>
    <dbReference type="NCBI Taxonomy" id="221109"/>
    <lineage>
        <taxon>Bacteria</taxon>
        <taxon>Bacillati</taxon>
        <taxon>Bacillota</taxon>
        <taxon>Bacilli</taxon>
        <taxon>Bacillales</taxon>
        <taxon>Bacillaceae</taxon>
        <taxon>Oceanobacillus</taxon>
    </lineage>
</organism>